<dbReference type="EMBL" id="X14855">
    <property type="protein sequence ID" value="CAA32992.1"/>
    <property type="molecule type" value="Genomic_DNA"/>
</dbReference>
<dbReference type="Proteomes" id="UP000009250">
    <property type="component" value="Genome"/>
</dbReference>
<dbReference type="CDD" id="cd00761">
    <property type="entry name" value="Glyco_tranf_GTA_type"/>
    <property type="match status" value="1"/>
</dbReference>
<dbReference type="InterPro" id="IPR029044">
    <property type="entry name" value="Nucleotide-diphossugar_trans"/>
</dbReference>
<dbReference type="SUPFAM" id="SSF53448">
    <property type="entry name" value="Nucleotide-diphospho-sugar transferases"/>
    <property type="match status" value="1"/>
</dbReference>
<keyword id="KW-1185">Reference proteome</keyword>
<feature type="chain" id="PRO_0000222978" description="Uncharacterized 26.8 kDa protein">
    <location>
        <begin position="1"/>
        <end position="232"/>
    </location>
</feature>
<protein>
    <recommendedName>
        <fullName>Uncharacterized 26.8 kDa protein</fullName>
    </recommendedName>
</protein>
<organismHost>
    <name type="scientific">Thermoproteus tenax</name>
    <dbReference type="NCBI Taxonomy" id="2271"/>
</organismHost>
<accession>P19296</accession>
<proteinExistence type="predicted"/>
<name>YORL_TTV1K</name>
<organism>
    <name type="scientific">Thermoproteus tenax virus 1 (strain KRA1)</name>
    <name type="common">TTV1</name>
    <dbReference type="NCBI Taxonomy" id="10480"/>
    <lineage>
        <taxon>Viruses</taxon>
        <taxon>Adnaviria</taxon>
        <taxon>Zilligvirae</taxon>
        <taxon>Taleaviricota</taxon>
        <taxon>Tokiviricetes</taxon>
        <taxon>Primavirales</taxon>
        <taxon>Tristromaviridae</taxon>
        <taxon>Betatristromavirus</taxon>
        <taxon>Betatristromavirus TTV1</taxon>
    </lineage>
</organism>
<reference key="1">
    <citation type="submission" date="1989-03" db="EMBL/GenBank/DDBJ databases">
        <authorList>
            <person name="Neumann H."/>
        </authorList>
    </citation>
    <scope>NUCLEOTIDE SEQUENCE [GENOMIC DNA]</scope>
</reference>
<sequence>MDVAVVILYSRDDALDLLYRTLHYWWKRSDGLRGQIYVVSNTNVLLPRYAKLIQQKRKGVGGARCDAIESTSEDYIIFSDGHVTPPREISKMLVEPWSSVPINHIILPFGTSGRVAYSLPFMPDERQFLWCSCSKYKEEITTTGEPIVAMSRKYISMSKCYTSYGLDLFQFTLRMPPGQLIGDEGIHFIEAKKLISNRKPNKDEMKDFYDTIYIKRKSEIEEEIKECFCRAL</sequence>